<name>DCUP_STAAW</name>
<evidence type="ECO:0000255" key="1">
    <source>
        <dbReference type="HAMAP-Rule" id="MF_00218"/>
    </source>
</evidence>
<gene>
    <name evidence="1" type="primary">hemE</name>
    <name type="ordered locus">MW1774</name>
</gene>
<organism>
    <name type="scientific">Staphylococcus aureus (strain MW2)</name>
    <dbReference type="NCBI Taxonomy" id="196620"/>
    <lineage>
        <taxon>Bacteria</taxon>
        <taxon>Bacillati</taxon>
        <taxon>Bacillota</taxon>
        <taxon>Bacilli</taxon>
        <taxon>Bacillales</taxon>
        <taxon>Staphylococcaceae</taxon>
        <taxon>Staphylococcus</taxon>
    </lineage>
</organism>
<keyword id="KW-0963">Cytoplasm</keyword>
<keyword id="KW-0210">Decarboxylase</keyword>
<keyword id="KW-0456">Lyase</keyword>
<keyword id="KW-0627">Porphyrin biosynthesis</keyword>
<dbReference type="EC" id="4.1.1.37" evidence="1"/>
<dbReference type="EMBL" id="BA000033">
    <property type="protein sequence ID" value="BAB95639.1"/>
    <property type="molecule type" value="Genomic_DNA"/>
</dbReference>
<dbReference type="RefSeq" id="WP_000233526.1">
    <property type="nucleotide sequence ID" value="NC_003923.1"/>
</dbReference>
<dbReference type="SMR" id="P67421"/>
<dbReference type="KEGG" id="sam:MW1774"/>
<dbReference type="HOGENOM" id="CLU_040933_0_1_9"/>
<dbReference type="UniPathway" id="UPA00251">
    <property type="reaction ID" value="UER00321"/>
</dbReference>
<dbReference type="GO" id="GO:0005829">
    <property type="term" value="C:cytosol"/>
    <property type="evidence" value="ECO:0007669"/>
    <property type="project" value="TreeGrafter"/>
</dbReference>
<dbReference type="GO" id="GO:0004853">
    <property type="term" value="F:uroporphyrinogen decarboxylase activity"/>
    <property type="evidence" value="ECO:0007669"/>
    <property type="project" value="UniProtKB-UniRule"/>
</dbReference>
<dbReference type="GO" id="GO:0006782">
    <property type="term" value="P:protoporphyrinogen IX biosynthetic process"/>
    <property type="evidence" value="ECO:0007669"/>
    <property type="project" value="UniProtKB-UniRule"/>
</dbReference>
<dbReference type="CDD" id="cd00717">
    <property type="entry name" value="URO-D"/>
    <property type="match status" value="1"/>
</dbReference>
<dbReference type="FunFam" id="3.20.20.210:FF:000005">
    <property type="entry name" value="Uroporphyrinogen decarboxylase"/>
    <property type="match status" value="1"/>
</dbReference>
<dbReference type="Gene3D" id="3.20.20.210">
    <property type="match status" value="1"/>
</dbReference>
<dbReference type="HAMAP" id="MF_00218">
    <property type="entry name" value="URO_D"/>
    <property type="match status" value="1"/>
</dbReference>
<dbReference type="InterPro" id="IPR038071">
    <property type="entry name" value="UROD/MetE-like_sf"/>
</dbReference>
<dbReference type="InterPro" id="IPR006361">
    <property type="entry name" value="Uroporphyrinogen_deCO2ase_HemE"/>
</dbReference>
<dbReference type="InterPro" id="IPR000257">
    <property type="entry name" value="Uroporphyrinogen_deCOase"/>
</dbReference>
<dbReference type="NCBIfam" id="TIGR01464">
    <property type="entry name" value="hemE"/>
    <property type="match status" value="1"/>
</dbReference>
<dbReference type="PANTHER" id="PTHR21091">
    <property type="entry name" value="METHYLTETRAHYDROFOLATE:HOMOCYSTEINE METHYLTRANSFERASE RELATED"/>
    <property type="match status" value="1"/>
</dbReference>
<dbReference type="PANTHER" id="PTHR21091:SF169">
    <property type="entry name" value="UROPORPHYRINOGEN DECARBOXYLASE"/>
    <property type="match status" value="1"/>
</dbReference>
<dbReference type="Pfam" id="PF01208">
    <property type="entry name" value="URO-D"/>
    <property type="match status" value="1"/>
</dbReference>
<dbReference type="SUPFAM" id="SSF51726">
    <property type="entry name" value="UROD/MetE-like"/>
    <property type="match status" value="1"/>
</dbReference>
<dbReference type="PROSITE" id="PS00906">
    <property type="entry name" value="UROD_1"/>
    <property type="match status" value="1"/>
</dbReference>
<dbReference type="PROSITE" id="PS00907">
    <property type="entry name" value="UROD_2"/>
    <property type="match status" value="1"/>
</dbReference>
<proteinExistence type="inferred from homology"/>
<comment type="function">
    <text evidence="1">Catalyzes the decarboxylation of four acetate groups of uroporphyrinogen-III to yield coproporphyrinogen-III.</text>
</comment>
<comment type="catalytic activity">
    <reaction evidence="1">
        <text>uroporphyrinogen III + 4 H(+) = coproporphyrinogen III + 4 CO2</text>
        <dbReference type="Rhea" id="RHEA:19865"/>
        <dbReference type="ChEBI" id="CHEBI:15378"/>
        <dbReference type="ChEBI" id="CHEBI:16526"/>
        <dbReference type="ChEBI" id="CHEBI:57308"/>
        <dbReference type="ChEBI" id="CHEBI:57309"/>
        <dbReference type="EC" id="4.1.1.37"/>
    </reaction>
</comment>
<comment type="pathway">
    <text evidence="1">Porphyrin-containing compound metabolism; protoporphyrin-IX biosynthesis; coproporphyrinogen-III from 5-aminolevulinate: step 4/4.</text>
</comment>
<comment type="subunit">
    <text evidence="1">Homodimer.</text>
</comment>
<comment type="subcellular location">
    <subcellularLocation>
        <location evidence="1">Cytoplasm</location>
    </subcellularLocation>
</comment>
<comment type="similarity">
    <text evidence="1">Belongs to the uroporphyrinogen decarboxylase family.</text>
</comment>
<feature type="chain" id="PRO_0000187644" description="Uroporphyrinogen decarboxylase">
    <location>
        <begin position="1"/>
        <end position="345"/>
    </location>
</feature>
<feature type="binding site" evidence="1">
    <location>
        <begin position="27"/>
        <end position="31"/>
    </location>
    <ligand>
        <name>substrate</name>
    </ligand>
</feature>
<feature type="binding site" evidence="1">
    <location>
        <position position="46"/>
    </location>
    <ligand>
        <name>substrate</name>
    </ligand>
</feature>
<feature type="binding site" evidence="1">
    <location>
        <position position="76"/>
    </location>
    <ligand>
        <name>substrate</name>
    </ligand>
</feature>
<feature type="binding site" evidence="1">
    <location>
        <position position="152"/>
    </location>
    <ligand>
        <name>substrate</name>
    </ligand>
</feature>
<feature type="binding site" evidence="1">
    <location>
        <position position="207"/>
    </location>
    <ligand>
        <name>substrate</name>
    </ligand>
</feature>
<feature type="binding site" evidence="1">
    <location>
        <position position="321"/>
    </location>
    <ligand>
        <name>substrate</name>
    </ligand>
</feature>
<feature type="site" description="Transition state stabilizer" evidence="1">
    <location>
        <position position="76"/>
    </location>
</feature>
<accession>P67421</accession>
<accession>Q99T42</accession>
<protein>
    <recommendedName>
        <fullName evidence="1">Uroporphyrinogen decarboxylase</fullName>
        <shortName evidence="1">UPD</shortName>
        <shortName evidence="1">URO-D</shortName>
        <ecNumber evidence="1">4.1.1.37</ecNumber>
    </recommendedName>
</protein>
<sequence>MVHNKNNTILKMIKGEETSHTPVWFMRQAGRSQPEYRKLKEKYSLFDITHQPELCAYVTHLPVDNYHTDAAILYKDIMTPLKPIGVDVEIKSGIGPVIHNPIKTIQDVEKLSQIDPERDVPYVLDTIKLLTEEKLNVPLIGFTGAPFTLASYMIEGGPSKNYNFTKAMMYRDEATWFALMNHLVDVSVKYVTAQVEAGAELIQIFDSWVGALNVEDYRRYIKPHMIRLISEVKEKHDVPVILFGVGASHLINEWNDLPIDVLGLDWRTSINQAQQLGVTKTLQGNLDPSILLAPWNVIEERLKPILDQGMENGKHIFNLGHGVFPEVQPETLRKVSEFVHTYTQR</sequence>
<reference key="1">
    <citation type="journal article" date="2002" name="Lancet">
        <title>Genome and virulence determinants of high virulence community-acquired MRSA.</title>
        <authorList>
            <person name="Baba T."/>
            <person name="Takeuchi F."/>
            <person name="Kuroda M."/>
            <person name="Yuzawa H."/>
            <person name="Aoki K."/>
            <person name="Oguchi A."/>
            <person name="Nagai Y."/>
            <person name="Iwama N."/>
            <person name="Asano K."/>
            <person name="Naimi T."/>
            <person name="Kuroda H."/>
            <person name="Cui L."/>
            <person name="Yamamoto K."/>
            <person name="Hiramatsu K."/>
        </authorList>
    </citation>
    <scope>NUCLEOTIDE SEQUENCE [LARGE SCALE GENOMIC DNA]</scope>
    <source>
        <strain>MW2</strain>
    </source>
</reference>